<sequence length="355" mass="40314">MLDRLQAVENRYEKLNELLSDPAIISDSNKLREYSKEQSDIQETVEVYREYKDVREQLKDAKAMLEDKLDAEMREMVKEEVSELESQDKTLSERLKILLVPKDPNDDKNVIVEVRGAAGGDEAALFAGDLYRMYSRYAEVQGWKTEIIEASYTELGGYKEIIFMINGKGAFAKLKFENGAHRVQRVPETESGGRIHTSTATVAVLPEAEEVEIDIHEKDVRVDTFASSGPGGQSVNTTMSAVRLTHLPTGVVVSCQDEKSQIKNKEKAMKVLRARVYDKFRQEAQAEYDQNRKQAVGTGDRSERIRTYNFPQNRVTDHRIGLTIQKLDQILQGKLDDFINALVMEDQAQKMEAAE</sequence>
<comment type="function">
    <text evidence="1">Peptide chain release factor 1 directs the termination of translation in response to the peptide chain termination codons UAG and UAA.</text>
</comment>
<comment type="subcellular location">
    <subcellularLocation>
        <location evidence="1">Cytoplasm</location>
    </subcellularLocation>
</comment>
<comment type="PTM">
    <text evidence="1">Methylated by PrmC. Methylation increases the termination efficiency of RF1.</text>
</comment>
<comment type="similarity">
    <text evidence="1">Belongs to the prokaryotic/mitochondrial release factor family.</text>
</comment>
<comment type="sequence caution" evidence="2">
    <conflict type="erroneous initiation">
        <sequence resource="EMBL-CDS" id="AAP12192"/>
    </conflict>
</comment>
<feature type="chain" id="PRO_0000177627" description="Peptide chain release factor 1">
    <location>
        <begin position="1"/>
        <end position="355"/>
    </location>
</feature>
<feature type="modified residue" description="N5-methylglutamine" evidence="1">
    <location>
        <position position="233"/>
    </location>
</feature>
<reference key="1">
    <citation type="journal article" date="2003" name="Nature">
        <title>Genome sequence of Bacillus cereus and comparative analysis with Bacillus anthracis.</title>
        <authorList>
            <person name="Ivanova N."/>
            <person name="Sorokin A."/>
            <person name="Anderson I."/>
            <person name="Galleron N."/>
            <person name="Candelon B."/>
            <person name="Kapatral V."/>
            <person name="Bhattacharyya A."/>
            <person name="Reznik G."/>
            <person name="Mikhailova N."/>
            <person name="Lapidus A."/>
            <person name="Chu L."/>
            <person name="Mazur M."/>
            <person name="Goltsman E."/>
            <person name="Larsen N."/>
            <person name="D'Souza M."/>
            <person name="Walunas T."/>
            <person name="Grechkin Y."/>
            <person name="Pusch G."/>
            <person name="Haselkorn R."/>
            <person name="Fonstein M."/>
            <person name="Ehrlich S.D."/>
            <person name="Overbeek R."/>
            <person name="Kyrpides N.C."/>
        </authorList>
    </citation>
    <scope>NUCLEOTIDE SEQUENCE [LARGE SCALE GENOMIC DNA]</scope>
    <source>
        <strain>ATCC 14579 / DSM 31 / CCUG 7414 / JCM 2152 / NBRC 15305 / NCIMB 9373 / NCTC 2599 / NRRL B-3711</strain>
    </source>
</reference>
<accession>Q812I4</accession>
<evidence type="ECO:0000255" key="1">
    <source>
        <dbReference type="HAMAP-Rule" id="MF_00093"/>
    </source>
</evidence>
<evidence type="ECO:0000305" key="2"/>
<organism>
    <name type="scientific">Bacillus cereus (strain ATCC 14579 / DSM 31 / CCUG 7414 / JCM 2152 / NBRC 15305 / NCIMB 9373 / NCTC 2599 / NRRL B-3711)</name>
    <dbReference type="NCBI Taxonomy" id="226900"/>
    <lineage>
        <taxon>Bacteria</taxon>
        <taxon>Bacillati</taxon>
        <taxon>Bacillota</taxon>
        <taxon>Bacilli</taxon>
        <taxon>Bacillales</taxon>
        <taxon>Bacillaceae</taxon>
        <taxon>Bacillus</taxon>
        <taxon>Bacillus cereus group</taxon>
    </lineage>
</organism>
<dbReference type="EMBL" id="AE016877">
    <property type="protein sequence ID" value="AAP12192.1"/>
    <property type="status" value="ALT_INIT"/>
    <property type="molecule type" value="Genomic_DNA"/>
</dbReference>
<dbReference type="RefSeq" id="NP_834991.1">
    <property type="nucleotide sequence ID" value="NC_004722.1"/>
</dbReference>
<dbReference type="RefSeq" id="WP_000887064.1">
    <property type="nucleotide sequence ID" value="NZ_CP138336.1"/>
</dbReference>
<dbReference type="SMR" id="Q812I4"/>
<dbReference type="STRING" id="226900.BC_5329"/>
<dbReference type="KEGG" id="bce:BC5329"/>
<dbReference type="PATRIC" id="fig|226900.8.peg.5502"/>
<dbReference type="HOGENOM" id="CLU_036856_0_1_9"/>
<dbReference type="OrthoDB" id="9806673at2"/>
<dbReference type="Proteomes" id="UP000001417">
    <property type="component" value="Chromosome"/>
</dbReference>
<dbReference type="GO" id="GO:0005737">
    <property type="term" value="C:cytoplasm"/>
    <property type="evidence" value="ECO:0007669"/>
    <property type="project" value="UniProtKB-SubCell"/>
</dbReference>
<dbReference type="GO" id="GO:0016149">
    <property type="term" value="F:translation release factor activity, codon specific"/>
    <property type="evidence" value="ECO:0007669"/>
    <property type="project" value="UniProtKB-UniRule"/>
</dbReference>
<dbReference type="FunFam" id="3.30.160.20:FF:000004">
    <property type="entry name" value="Peptide chain release factor 1"/>
    <property type="match status" value="1"/>
</dbReference>
<dbReference type="FunFam" id="3.30.70.1660:FF:000002">
    <property type="entry name" value="Peptide chain release factor 1"/>
    <property type="match status" value="1"/>
</dbReference>
<dbReference type="FunFam" id="3.30.70.1660:FF:000004">
    <property type="entry name" value="Peptide chain release factor 1"/>
    <property type="match status" value="1"/>
</dbReference>
<dbReference type="Gene3D" id="3.30.160.20">
    <property type="match status" value="1"/>
</dbReference>
<dbReference type="Gene3D" id="3.30.70.1660">
    <property type="match status" value="1"/>
</dbReference>
<dbReference type="Gene3D" id="6.10.140.1950">
    <property type="match status" value="1"/>
</dbReference>
<dbReference type="HAMAP" id="MF_00093">
    <property type="entry name" value="Rel_fac_1"/>
    <property type="match status" value="1"/>
</dbReference>
<dbReference type="InterPro" id="IPR005139">
    <property type="entry name" value="PCRF"/>
</dbReference>
<dbReference type="InterPro" id="IPR000352">
    <property type="entry name" value="Pep_chain_release_fac_I"/>
</dbReference>
<dbReference type="InterPro" id="IPR045853">
    <property type="entry name" value="Pep_chain_release_fac_I_sf"/>
</dbReference>
<dbReference type="InterPro" id="IPR050057">
    <property type="entry name" value="Prokaryotic/Mito_RF"/>
</dbReference>
<dbReference type="InterPro" id="IPR004373">
    <property type="entry name" value="RF-1"/>
</dbReference>
<dbReference type="NCBIfam" id="TIGR00019">
    <property type="entry name" value="prfA"/>
    <property type="match status" value="1"/>
</dbReference>
<dbReference type="NCBIfam" id="NF001859">
    <property type="entry name" value="PRK00591.1"/>
    <property type="match status" value="1"/>
</dbReference>
<dbReference type="PANTHER" id="PTHR43804">
    <property type="entry name" value="LD18447P"/>
    <property type="match status" value="1"/>
</dbReference>
<dbReference type="PANTHER" id="PTHR43804:SF7">
    <property type="entry name" value="LD18447P"/>
    <property type="match status" value="1"/>
</dbReference>
<dbReference type="Pfam" id="PF03462">
    <property type="entry name" value="PCRF"/>
    <property type="match status" value="1"/>
</dbReference>
<dbReference type="Pfam" id="PF00472">
    <property type="entry name" value="RF-1"/>
    <property type="match status" value="1"/>
</dbReference>
<dbReference type="SMART" id="SM00937">
    <property type="entry name" value="PCRF"/>
    <property type="match status" value="1"/>
</dbReference>
<dbReference type="SUPFAM" id="SSF75620">
    <property type="entry name" value="Release factor"/>
    <property type="match status" value="1"/>
</dbReference>
<dbReference type="PROSITE" id="PS00745">
    <property type="entry name" value="RF_PROK_I"/>
    <property type="match status" value="1"/>
</dbReference>
<keyword id="KW-0963">Cytoplasm</keyword>
<keyword id="KW-0488">Methylation</keyword>
<keyword id="KW-0648">Protein biosynthesis</keyword>
<keyword id="KW-1185">Reference proteome</keyword>
<protein>
    <recommendedName>
        <fullName evidence="1">Peptide chain release factor 1</fullName>
        <shortName evidence="1">RF-1</shortName>
    </recommendedName>
</protein>
<gene>
    <name evidence="1" type="primary">prfA</name>
    <name type="ordered locus">BC_5329</name>
</gene>
<proteinExistence type="inferred from homology"/>
<name>RF1_BACCR</name>